<protein>
    <recommendedName>
        <fullName>(6-4)DNA photolyase</fullName>
        <ecNumber>4.1.99.13</ecNumber>
    </recommendedName>
</protein>
<comment type="function">
    <text evidence="1">Involved in repair of UV radiation-induced DNA damage. Catalyzes the photoreactivation of pyrimidine [6-4] pyrimidone photoproduct (6-4 products) (By similarity).</text>
</comment>
<comment type="catalytic activity">
    <reaction>
        <text>(6-4) photoproduct (in DNA) = 2 pyrimidine residues (in DNA).</text>
        <dbReference type="EC" id="4.1.99.13"/>
    </reaction>
</comment>
<comment type="cofactor">
    <cofactor evidence="1">
        <name>FAD</name>
        <dbReference type="ChEBI" id="CHEBI:57692"/>
    </cofactor>
    <text evidence="1">Binds 1 FAD per subunit.</text>
</comment>
<comment type="similarity">
    <text evidence="3">Belongs to the DNA photolyase class-1 family.</text>
</comment>
<comment type="sequence caution" evidence="3">
    <conflict type="erroneous gene model prediction">
        <sequence resource="EMBL-CDS" id="BAD16007"/>
    </conflict>
</comment>
<comment type="sequence caution" evidence="3">
    <conflict type="erroneous gene model prediction">
        <sequence resource="EMBL-CDS" id="BAD38427"/>
    </conflict>
</comment>
<keyword id="KW-0227">DNA damage</keyword>
<keyword id="KW-0234">DNA repair</keyword>
<keyword id="KW-0238">DNA-binding</keyword>
<keyword id="KW-0274">FAD</keyword>
<keyword id="KW-0285">Flavoprotein</keyword>
<keyword id="KW-0456">Lyase</keyword>
<keyword id="KW-0547">Nucleotide-binding</keyword>
<keyword id="KW-1185">Reference proteome</keyword>
<evidence type="ECO:0000250" key="1"/>
<evidence type="ECO:0000256" key="2">
    <source>
        <dbReference type="SAM" id="MobiDB-lite"/>
    </source>
</evidence>
<evidence type="ECO:0000305" key="3"/>
<sequence>MDAAATAATATAAAAMVWFRKGLRVHDNPALDAARRGGAAARLYPVFVLDPRYLRPDQAAPSPGSARAGVARVRFLLESLSDLDARLRRLGSRLLLLRARDDGDVAGTVCAALKDWNIGKLCFESDTEPYALARDKKVMDFAAASGIDVFSPVSHTLFDPAEIIEKNGGRPPMTYQSFVAIAGEPPEPIMEEYSELPPVGDTGEYELLPVPRVEELGYGDISQEDLSLFRGGETEALKRMRESLHDKEWVAKFEKPKGDPSAFLKPATTVLSPYLKFGCLSSRYFYHCIQDIYRSTKKHTNPPVSLTGQLLWRDFFYTVAFGTPNFDQMKGNKICKQIPWTENEELFPAWRDGRTGYPWIDAIMIQLRKWGWMHHLARHSVACFLTRGDLFIHWEKGRDVFERLLIDSDWAINNGNWMWLSCSSFFYQYHRIYSPTSFGKKYDPNGNYIRHFIPVLKDMPKEYIYEPWTAPLSIQKKANCIIGKDYPKPVVDHAIASKECKKMMGEAYASNRLDDDKPDKGKSSNSSRRKLSAGSQVTPNSSKTKQLKRSS</sequence>
<name>UVR3_ORYSJ</name>
<feature type="chain" id="PRO_0000397887" description="(6-4)DNA photolyase">
    <location>
        <begin position="1"/>
        <end position="551"/>
    </location>
</feature>
<feature type="domain" description="Photolyase/cryptochrome alpha/beta">
    <location>
        <begin position="13"/>
        <end position="157"/>
    </location>
</feature>
<feature type="region of interest" description="Interaction with DNA" evidence="1">
    <location>
        <begin position="374"/>
        <end position="379"/>
    </location>
</feature>
<feature type="region of interest" description="Disordered" evidence="2">
    <location>
        <begin position="508"/>
        <end position="551"/>
    </location>
</feature>
<feature type="compositionally biased region" description="Basic and acidic residues" evidence="2">
    <location>
        <begin position="512"/>
        <end position="522"/>
    </location>
</feature>
<feature type="compositionally biased region" description="Polar residues" evidence="2">
    <location>
        <begin position="533"/>
        <end position="544"/>
    </location>
</feature>
<feature type="binding site" evidence="1">
    <location>
        <position position="254"/>
    </location>
    <ligand>
        <name>phosphate</name>
        <dbReference type="ChEBI" id="CHEBI:43474"/>
    </ligand>
</feature>
<feature type="binding site" evidence="1">
    <location>
        <position position="255"/>
    </location>
    <ligand>
        <name>FAD</name>
        <dbReference type="ChEBI" id="CHEBI:57692"/>
    </ligand>
</feature>
<feature type="binding site" evidence="1">
    <location>
        <begin position="268"/>
        <end position="272"/>
    </location>
    <ligand>
        <name>FAD</name>
        <dbReference type="ChEBI" id="CHEBI:57692"/>
    </ligand>
</feature>
<feature type="binding site" evidence="1">
    <location>
        <begin position="309"/>
        <end position="313"/>
    </location>
    <ligand>
        <name>FAD</name>
        <dbReference type="ChEBI" id="CHEBI:57692"/>
    </ligand>
</feature>
<feature type="binding site" evidence="1">
    <location>
        <position position="312"/>
    </location>
    <ligand>
        <name>DNA</name>
        <dbReference type="ChEBI" id="CHEBI:16991"/>
    </ligand>
</feature>
<feature type="binding site" evidence="1">
    <location>
        <begin position="372"/>
        <end position="375"/>
    </location>
    <ligand>
        <name>FAD</name>
        <dbReference type="ChEBI" id="CHEBI:57692"/>
    </ligand>
</feature>
<feature type="binding site" evidence="1">
    <location>
        <position position="378"/>
    </location>
    <ligand>
        <name>FAD</name>
        <dbReference type="ChEBI" id="CHEBI:57692"/>
    </ligand>
</feature>
<feature type="binding site" evidence="1">
    <location>
        <begin position="407"/>
        <end position="409"/>
    </location>
    <ligand>
        <name>FAD</name>
        <dbReference type="ChEBI" id="CHEBI:57692"/>
    </ligand>
</feature>
<feature type="binding site" evidence="1">
    <location>
        <position position="413"/>
    </location>
    <ligand>
        <name>FAD</name>
        <dbReference type="ChEBI" id="CHEBI:57692"/>
    </ligand>
</feature>
<feature type="binding site" evidence="1">
    <location>
        <position position="419"/>
    </location>
    <ligand>
        <name>DNA</name>
        <dbReference type="ChEBI" id="CHEBI:16991"/>
    </ligand>
</feature>
<feature type="site" description="Electron transfer via tryptophanyl radical" evidence="1">
    <location>
        <position position="340"/>
    </location>
</feature>
<feature type="site" description="Electron transfer via tryptophanyl radical" evidence="1">
    <location>
        <position position="394"/>
    </location>
</feature>
<feature type="site" description="Electron transfer via tryptophanyl radical" evidence="1">
    <location>
        <position position="417"/>
    </location>
</feature>
<feature type="sequence conflict" description="In Ref. 4; EEE56527." evidence="3" ref="4">
    <original>A</original>
    <variation>V</variation>
    <location>
        <position position="40"/>
    </location>
</feature>
<accession>Q0E2Y1</accession>
<accession>A0A0P0VG67</accession>
<accession>B9F3X5</accession>
<accession>Q6Z6D9</accession>
<dbReference type="EC" id="4.1.99.13"/>
<dbReference type="EMBL" id="AP005008">
    <property type="protein sequence ID" value="BAD16007.1"/>
    <property type="status" value="ALT_SEQ"/>
    <property type="molecule type" value="Genomic_DNA"/>
</dbReference>
<dbReference type="EMBL" id="AP005915">
    <property type="protein sequence ID" value="BAD38427.1"/>
    <property type="status" value="ALT_SEQ"/>
    <property type="molecule type" value="Genomic_DNA"/>
</dbReference>
<dbReference type="EMBL" id="AP008208">
    <property type="protein sequence ID" value="BAF08157.2"/>
    <property type="molecule type" value="Genomic_DNA"/>
</dbReference>
<dbReference type="EMBL" id="AP014958">
    <property type="protein sequence ID" value="BAS77547.1"/>
    <property type="molecule type" value="Genomic_DNA"/>
</dbReference>
<dbReference type="EMBL" id="CM000139">
    <property type="protein sequence ID" value="EEE56527.1"/>
    <property type="molecule type" value="Genomic_DNA"/>
</dbReference>
<dbReference type="RefSeq" id="XP_015623929.1">
    <property type="nucleotide sequence ID" value="XM_015768443.1"/>
</dbReference>
<dbReference type="SMR" id="Q0E2Y1"/>
<dbReference type="FunCoup" id="Q0E2Y1">
    <property type="interactions" value="1004"/>
</dbReference>
<dbReference type="STRING" id="39947.Q0E2Y1"/>
<dbReference type="PaxDb" id="39947-Q0E2Y1"/>
<dbReference type="EnsemblPlants" id="Os02t0204400-00">
    <property type="protein sequence ID" value="Os02t0204400-00"/>
    <property type="gene ID" value="Os02g0204400"/>
</dbReference>
<dbReference type="Gramene" id="Os02t0204400-00">
    <property type="protein sequence ID" value="Os02t0204400-00"/>
    <property type="gene ID" value="Os02g0204400"/>
</dbReference>
<dbReference type="KEGG" id="dosa:Os02g0204400"/>
<dbReference type="eggNOG" id="KOG0133">
    <property type="taxonomic scope" value="Eukaryota"/>
</dbReference>
<dbReference type="HOGENOM" id="CLU_010348_3_4_1"/>
<dbReference type="InParanoid" id="Q0E2Y1"/>
<dbReference type="OMA" id="YTVFTPY"/>
<dbReference type="OrthoDB" id="435881at2759"/>
<dbReference type="Proteomes" id="UP000000763">
    <property type="component" value="Chromosome 2"/>
</dbReference>
<dbReference type="Proteomes" id="UP000007752">
    <property type="component" value="Chromosome 2"/>
</dbReference>
<dbReference type="Proteomes" id="UP000059680">
    <property type="component" value="Chromosome 2"/>
</dbReference>
<dbReference type="GO" id="GO:0005737">
    <property type="term" value="C:cytoplasm"/>
    <property type="evidence" value="ECO:0000318"/>
    <property type="project" value="GO_Central"/>
</dbReference>
<dbReference type="GO" id="GO:0005634">
    <property type="term" value="C:nucleus"/>
    <property type="evidence" value="ECO:0000318"/>
    <property type="project" value="GO_Central"/>
</dbReference>
<dbReference type="GO" id="GO:0003904">
    <property type="term" value="F:deoxyribodipyrimidine photo-lyase activity"/>
    <property type="evidence" value="ECO:0000318"/>
    <property type="project" value="GO_Central"/>
</dbReference>
<dbReference type="GO" id="GO:0003914">
    <property type="term" value="F:DNA (6-4) photolyase activity"/>
    <property type="evidence" value="ECO:0007669"/>
    <property type="project" value="UniProtKB-EC"/>
</dbReference>
<dbReference type="GO" id="GO:0003677">
    <property type="term" value="F:DNA binding"/>
    <property type="evidence" value="ECO:0000318"/>
    <property type="project" value="GO_Central"/>
</dbReference>
<dbReference type="GO" id="GO:0071949">
    <property type="term" value="F:FAD binding"/>
    <property type="evidence" value="ECO:0000318"/>
    <property type="project" value="GO_Central"/>
</dbReference>
<dbReference type="GO" id="GO:0032922">
    <property type="term" value="P:circadian regulation of gene expression"/>
    <property type="evidence" value="ECO:0000318"/>
    <property type="project" value="GO_Central"/>
</dbReference>
<dbReference type="GO" id="GO:0043153">
    <property type="term" value="P:entrainment of circadian clock by photoperiod"/>
    <property type="evidence" value="ECO:0000318"/>
    <property type="project" value="GO_Central"/>
</dbReference>
<dbReference type="GO" id="GO:0006290">
    <property type="term" value="P:pyrimidine dimer repair"/>
    <property type="evidence" value="ECO:0007669"/>
    <property type="project" value="EnsemblPlants"/>
</dbReference>
<dbReference type="GO" id="GO:0009411">
    <property type="term" value="P:response to UV"/>
    <property type="evidence" value="ECO:0007669"/>
    <property type="project" value="EnsemblPlants"/>
</dbReference>
<dbReference type="FunFam" id="1.10.579.10:FF:000004">
    <property type="entry name" value="Cryptochrome-1"/>
    <property type="match status" value="1"/>
</dbReference>
<dbReference type="Gene3D" id="1.25.40.80">
    <property type="match status" value="2"/>
</dbReference>
<dbReference type="Gene3D" id="1.10.579.10">
    <property type="entry name" value="DNA Cyclobutane Dipyrimidine Photolyase, subunit A, domain 3"/>
    <property type="match status" value="1"/>
</dbReference>
<dbReference type="Gene3D" id="3.40.50.620">
    <property type="entry name" value="HUPs"/>
    <property type="match status" value="1"/>
</dbReference>
<dbReference type="InterPro" id="IPR036134">
    <property type="entry name" value="Crypto/Photolyase_FAD-like_sf"/>
</dbReference>
<dbReference type="InterPro" id="IPR036155">
    <property type="entry name" value="Crypto/Photolyase_N_sf"/>
</dbReference>
<dbReference type="InterPro" id="IPR005101">
    <property type="entry name" value="Cryptochr/Photolyase_FAD-bd"/>
</dbReference>
<dbReference type="InterPro" id="IPR002081">
    <property type="entry name" value="Cryptochrome/DNA_photolyase_1"/>
</dbReference>
<dbReference type="InterPro" id="IPR006050">
    <property type="entry name" value="DNA_photolyase_N"/>
</dbReference>
<dbReference type="InterPro" id="IPR014729">
    <property type="entry name" value="Rossmann-like_a/b/a_fold"/>
</dbReference>
<dbReference type="PANTHER" id="PTHR11455">
    <property type="entry name" value="CRYPTOCHROME"/>
    <property type="match status" value="1"/>
</dbReference>
<dbReference type="PANTHER" id="PTHR11455:SF9">
    <property type="entry name" value="CRYPTOCHROME CIRCADIAN CLOCK 5 ISOFORM X1"/>
    <property type="match status" value="1"/>
</dbReference>
<dbReference type="Pfam" id="PF00875">
    <property type="entry name" value="DNA_photolyase"/>
    <property type="match status" value="1"/>
</dbReference>
<dbReference type="Pfam" id="PF03441">
    <property type="entry name" value="FAD_binding_7"/>
    <property type="match status" value="1"/>
</dbReference>
<dbReference type="SUPFAM" id="SSF48173">
    <property type="entry name" value="Cryptochrome/photolyase FAD-binding domain"/>
    <property type="match status" value="1"/>
</dbReference>
<dbReference type="SUPFAM" id="SSF52425">
    <property type="entry name" value="Cryptochrome/photolyase, N-terminal domain"/>
    <property type="match status" value="1"/>
</dbReference>
<dbReference type="PROSITE" id="PS51645">
    <property type="entry name" value="PHR_CRY_ALPHA_BETA"/>
    <property type="match status" value="1"/>
</dbReference>
<organism>
    <name type="scientific">Oryza sativa subsp. japonica</name>
    <name type="common">Rice</name>
    <dbReference type="NCBI Taxonomy" id="39947"/>
    <lineage>
        <taxon>Eukaryota</taxon>
        <taxon>Viridiplantae</taxon>
        <taxon>Streptophyta</taxon>
        <taxon>Embryophyta</taxon>
        <taxon>Tracheophyta</taxon>
        <taxon>Spermatophyta</taxon>
        <taxon>Magnoliopsida</taxon>
        <taxon>Liliopsida</taxon>
        <taxon>Poales</taxon>
        <taxon>Poaceae</taxon>
        <taxon>BOP clade</taxon>
        <taxon>Oryzoideae</taxon>
        <taxon>Oryzeae</taxon>
        <taxon>Oryzinae</taxon>
        <taxon>Oryza</taxon>
        <taxon>Oryza sativa</taxon>
    </lineage>
</organism>
<reference key="1">
    <citation type="journal article" date="2005" name="Nature">
        <title>The map-based sequence of the rice genome.</title>
        <authorList>
            <consortium name="International rice genome sequencing project (IRGSP)"/>
        </authorList>
    </citation>
    <scope>NUCLEOTIDE SEQUENCE [LARGE SCALE GENOMIC DNA]</scope>
    <source>
        <strain>cv. Nipponbare</strain>
    </source>
</reference>
<reference key="2">
    <citation type="journal article" date="2008" name="Nucleic Acids Res.">
        <title>The rice annotation project database (RAP-DB): 2008 update.</title>
        <authorList>
            <consortium name="The rice annotation project (RAP)"/>
        </authorList>
    </citation>
    <scope>GENOME REANNOTATION</scope>
    <source>
        <strain>cv. Nipponbare</strain>
    </source>
</reference>
<reference key="3">
    <citation type="journal article" date="2013" name="Rice">
        <title>Improvement of the Oryza sativa Nipponbare reference genome using next generation sequence and optical map data.</title>
        <authorList>
            <person name="Kawahara Y."/>
            <person name="de la Bastide M."/>
            <person name="Hamilton J.P."/>
            <person name="Kanamori H."/>
            <person name="McCombie W.R."/>
            <person name="Ouyang S."/>
            <person name="Schwartz D.C."/>
            <person name="Tanaka T."/>
            <person name="Wu J."/>
            <person name="Zhou S."/>
            <person name="Childs K.L."/>
            <person name="Davidson R.M."/>
            <person name="Lin H."/>
            <person name="Quesada-Ocampo L."/>
            <person name="Vaillancourt B."/>
            <person name="Sakai H."/>
            <person name="Lee S.S."/>
            <person name="Kim J."/>
            <person name="Numa H."/>
            <person name="Itoh T."/>
            <person name="Buell C.R."/>
            <person name="Matsumoto T."/>
        </authorList>
    </citation>
    <scope>GENOME REANNOTATION</scope>
    <source>
        <strain>cv. Nipponbare</strain>
    </source>
</reference>
<reference key="4">
    <citation type="journal article" date="2005" name="PLoS Biol.">
        <title>The genomes of Oryza sativa: a history of duplications.</title>
        <authorList>
            <person name="Yu J."/>
            <person name="Wang J."/>
            <person name="Lin W."/>
            <person name="Li S."/>
            <person name="Li H."/>
            <person name="Zhou J."/>
            <person name="Ni P."/>
            <person name="Dong W."/>
            <person name="Hu S."/>
            <person name="Zeng C."/>
            <person name="Zhang J."/>
            <person name="Zhang Y."/>
            <person name="Li R."/>
            <person name="Xu Z."/>
            <person name="Li S."/>
            <person name="Li X."/>
            <person name="Zheng H."/>
            <person name="Cong L."/>
            <person name="Lin L."/>
            <person name="Yin J."/>
            <person name="Geng J."/>
            <person name="Li G."/>
            <person name="Shi J."/>
            <person name="Liu J."/>
            <person name="Lv H."/>
            <person name="Li J."/>
            <person name="Wang J."/>
            <person name="Deng Y."/>
            <person name="Ran L."/>
            <person name="Shi X."/>
            <person name="Wang X."/>
            <person name="Wu Q."/>
            <person name="Li C."/>
            <person name="Ren X."/>
            <person name="Wang J."/>
            <person name="Wang X."/>
            <person name="Li D."/>
            <person name="Liu D."/>
            <person name="Zhang X."/>
            <person name="Ji Z."/>
            <person name="Zhao W."/>
            <person name="Sun Y."/>
            <person name="Zhang Z."/>
            <person name="Bao J."/>
            <person name="Han Y."/>
            <person name="Dong L."/>
            <person name="Ji J."/>
            <person name="Chen P."/>
            <person name="Wu S."/>
            <person name="Liu J."/>
            <person name="Xiao Y."/>
            <person name="Bu D."/>
            <person name="Tan J."/>
            <person name="Yang L."/>
            <person name="Ye C."/>
            <person name="Zhang J."/>
            <person name="Xu J."/>
            <person name="Zhou Y."/>
            <person name="Yu Y."/>
            <person name="Zhang B."/>
            <person name="Zhuang S."/>
            <person name="Wei H."/>
            <person name="Liu B."/>
            <person name="Lei M."/>
            <person name="Yu H."/>
            <person name="Li Y."/>
            <person name="Xu H."/>
            <person name="Wei S."/>
            <person name="He X."/>
            <person name="Fang L."/>
            <person name="Zhang Z."/>
            <person name="Zhang Y."/>
            <person name="Huang X."/>
            <person name="Su Z."/>
            <person name="Tong W."/>
            <person name="Li J."/>
            <person name="Tong Z."/>
            <person name="Li S."/>
            <person name="Ye J."/>
            <person name="Wang L."/>
            <person name="Fang L."/>
            <person name="Lei T."/>
            <person name="Chen C.-S."/>
            <person name="Chen H.-C."/>
            <person name="Xu Z."/>
            <person name="Li H."/>
            <person name="Huang H."/>
            <person name="Zhang F."/>
            <person name="Xu H."/>
            <person name="Li N."/>
            <person name="Zhao C."/>
            <person name="Li S."/>
            <person name="Dong L."/>
            <person name="Huang Y."/>
            <person name="Li L."/>
            <person name="Xi Y."/>
            <person name="Qi Q."/>
            <person name="Li W."/>
            <person name="Zhang B."/>
            <person name="Hu W."/>
            <person name="Zhang Y."/>
            <person name="Tian X."/>
            <person name="Jiao Y."/>
            <person name="Liang X."/>
            <person name="Jin J."/>
            <person name="Gao L."/>
            <person name="Zheng W."/>
            <person name="Hao B."/>
            <person name="Liu S.-M."/>
            <person name="Wang W."/>
            <person name="Yuan L."/>
            <person name="Cao M."/>
            <person name="McDermott J."/>
            <person name="Samudrala R."/>
            <person name="Wang J."/>
            <person name="Wong G.K.-S."/>
            <person name="Yang H."/>
        </authorList>
    </citation>
    <scope>NUCLEOTIDE SEQUENCE [LARGE SCALE GENOMIC DNA]</scope>
    <source>
        <strain>cv. Nipponbare</strain>
    </source>
</reference>
<gene>
    <name type="primary">UVR3</name>
    <name type="ordered locus">Os02g0204400</name>
    <name type="ordered locus">LOC_Os02g10990</name>
    <name type="ORF">OSJNBb0056C19.3</name>
    <name type="ORF">P0544H11.19</name>
</gene>
<proteinExistence type="inferred from homology"/>